<evidence type="ECO:0000255" key="1">
    <source>
        <dbReference type="HAMAP-Rule" id="MF_00147"/>
    </source>
</evidence>
<sequence>MSRKPLIAGNWKMNLNHFEAIALVQKIAFSLPDKYYDKVDVTVIPPFTDLRSVQTLVDGDKLRLTYGGQDLSQHDSGAYTGDISGAFLAKLGCSFVVVGHSERRTYHNEDDALVAAKAAAALKHDLTPIVCIGEHLDVREAGNHVAHNVEQLRGSLSGLSAEQISKVVIAYEPVWAIGTGRVAGAADAQEVCAAIRSELGSLASPQIADAVRVLYGGSVNAKNIGELIAQADVDGGLVGGASLDGEQFATLAAIAAGGPLP</sequence>
<keyword id="KW-0963">Cytoplasm</keyword>
<keyword id="KW-0312">Gluconeogenesis</keyword>
<keyword id="KW-0324">Glycolysis</keyword>
<keyword id="KW-0413">Isomerase</keyword>
<keyword id="KW-1185">Reference proteome</keyword>
<dbReference type="EC" id="5.3.1.1" evidence="1"/>
<dbReference type="EMBL" id="CP000854">
    <property type="protein sequence ID" value="ACC40690.1"/>
    <property type="molecule type" value="Genomic_DNA"/>
</dbReference>
<dbReference type="RefSeq" id="WP_011739923.1">
    <property type="nucleotide sequence ID" value="NC_010612.1"/>
</dbReference>
<dbReference type="SMR" id="B2HP86"/>
<dbReference type="STRING" id="216594.MMAR_2241"/>
<dbReference type="GeneID" id="34343749"/>
<dbReference type="KEGG" id="mmi:MMAR_2241"/>
<dbReference type="eggNOG" id="COG0149">
    <property type="taxonomic scope" value="Bacteria"/>
</dbReference>
<dbReference type="HOGENOM" id="CLU_024251_2_3_11"/>
<dbReference type="OrthoDB" id="9809429at2"/>
<dbReference type="UniPathway" id="UPA00109">
    <property type="reaction ID" value="UER00189"/>
</dbReference>
<dbReference type="UniPathway" id="UPA00138"/>
<dbReference type="Proteomes" id="UP000001190">
    <property type="component" value="Chromosome"/>
</dbReference>
<dbReference type="GO" id="GO:0005829">
    <property type="term" value="C:cytosol"/>
    <property type="evidence" value="ECO:0007669"/>
    <property type="project" value="TreeGrafter"/>
</dbReference>
<dbReference type="GO" id="GO:0004807">
    <property type="term" value="F:triose-phosphate isomerase activity"/>
    <property type="evidence" value="ECO:0007669"/>
    <property type="project" value="UniProtKB-UniRule"/>
</dbReference>
<dbReference type="GO" id="GO:0006094">
    <property type="term" value="P:gluconeogenesis"/>
    <property type="evidence" value="ECO:0007669"/>
    <property type="project" value="UniProtKB-UniRule"/>
</dbReference>
<dbReference type="GO" id="GO:0046166">
    <property type="term" value="P:glyceraldehyde-3-phosphate biosynthetic process"/>
    <property type="evidence" value="ECO:0007669"/>
    <property type="project" value="TreeGrafter"/>
</dbReference>
<dbReference type="GO" id="GO:0019563">
    <property type="term" value="P:glycerol catabolic process"/>
    <property type="evidence" value="ECO:0007669"/>
    <property type="project" value="TreeGrafter"/>
</dbReference>
<dbReference type="GO" id="GO:0006096">
    <property type="term" value="P:glycolytic process"/>
    <property type="evidence" value="ECO:0007669"/>
    <property type="project" value="UniProtKB-UniRule"/>
</dbReference>
<dbReference type="CDD" id="cd00311">
    <property type="entry name" value="TIM"/>
    <property type="match status" value="1"/>
</dbReference>
<dbReference type="FunFam" id="3.20.20.70:FF:000020">
    <property type="entry name" value="Triosephosphate isomerase"/>
    <property type="match status" value="1"/>
</dbReference>
<dbReference type="Gene3D" id="3.20.20.70">
    <property type="entry name" value="Aldolase class I"/>
    <property type="match status" value="1"/>
</dbReference>
<dbReference type="HAMAP" id="MF_00147_B">
    <property type="entry name" value="TIM_B"/>
    <property type="match status" value="1"/>
</dbReference>
<dbReference type="InterPro" id="IPR013785">
    <property type="entry name" value="Aldolase_TIM"/>
</dbReference>
<dbReference type="InterPro" id="IPR035990">
    <property type="entry name" value="TIM_sf"/>
</dbReference>
<dbReference type="InterPro" id="IPR022896">
    <property type="entry name" value="TrioseP_Isoase_bac/euk"/>
</dbReference>
<dbReference type="InterPro" id="IPR000652">
    <property type="entry name" value="Triosephosphate_isomerase"/>
</dbReference>
<dbReference type="InterPro" id="IPR020861">
    <property type="entry name" value="Triosephosphate_isomerase_AS"/>
</dbReference>
<dbReference type="NCBIfam" id="TIGR00419">
    <property type="entry name" value="tim"/>
    <property type="match status" value="1"/>
</dbReference>
<dbReference type="PANTHER" id="PTHR21139">
    <property type="entry name" value="TRIOSEPHOSPHATE ISOMERASE"/>
    <property type="match status" value="1"/>
</dbReference>
<dbReference type="PANTHER" id="PTHR21139:SF42">
    <property type="entry name" value="TRIOSEPHOSPHATE ISOMERASE"/>
    <property type="match status" value="1"/>
</dbReference>
<dbReference type="Pfam" id="PF00121">
    <property type="entry name" value="TIM"/>
    <property type="match status" value="1"/>
</dbReference>
<dbReference type="SUPFAM" id="SSF51351">
    <property type="entry name" value="Triosephosphate isomerase (TIM)"/>
    <property type="match status" value="1"/>
</dbReference>
<dbReference type="PROSITE" id="PS00171">
    <property type="entry name" value="TIM_1"/>
    <property type="match status" value="1"/>
</dbReference>
<dbReference type="PROSITE" id="PS51440">
    <property type="entry name" value="TIM_2"/>
    <property type="match status" value="1"/>
</dbReference>
<protein>
    <recommendedName>
        <fullName evidence="1">Triosephosphate isomerase</fullName>
        <shortName evidence="1">TIM</shortName>
        <shortName evidence="1">TPI</shortName>
        <ecNumber evidence="1">5.3.1.1</ecNumber>
    </recommendedName>
    <alternativeName>
        <fullName evidence="1">Triose-phosphate isomerase</fullName>
    </alternativeName>
</protein>
<feature type="chain" id="PRO_1000096513" description="Triosephosphate isomerase">
    <location>
        <begin position="1"/>
        <end position="261"/>
    </location>
</feature>
<feature type="active site" description="Electrophile" evidence="1">
    <location>
        <position position="100"/>
    </location>
</feature>
<feature type="active site" description="Proton acceptor" evidence="1">
    <location>
        <position position="172"/>
    </location>
</feature>
<feature type="binding site" evidence="1">
    <location>
        <begin position="10"/>
        <end position="12"/>
    </location>
    <ligand>
        <name>substrate</name>
    </ligand>
</feature>
<feature type="binding site" evidence="1">
    <location>
        <position position="178"/>
    </location>
    <ligand>
        <name>substrate</name>
    </ligand>
</feature>
<feature type="binding site" evidence="1">
    <location>
        <position position="218"/>
    </location>
    <ligand>
        <name>substrate</name>
    </ligand>
</feature>
<feature type="binding site" evidence="1">
    <location>
        <begin position="239"/>
        <end position="240"/>
    </location>
    <ligand>
        <name>substrate</name>
    </ligand>
</feature>
<organism>
    <name type="scientific">Mycobacterium marinum (strain ATCC BAA-535 / M)</name>
    <dbReference type="NCBI Taxonomy" id="216594"/>
    <lineage>
        <taxon>Bacteria</taxon>
        <taxon>Bacillati</taxon>
        <taxon>Actinomycetota</taxon>
        <taxon>Actinomycetes</taxon>
        <taxon>Mycobacteriales</taxon>
        <taxon>Mycobacteriaceae</taxon>
        <taxon>Mycobacterium</taxon>
        <taxon>Mycobacterium ulcerans group</taxon>
    </lineage>
</organism>
<reference key="1">
    <citation type="journal article" date="2008" name="Genome Res.">
        <title>Insights from the complete genome sequence of Mycobacterium marinum on the evolution of Mycobacterium tuberculosis.</title>
        <authorList>
            <person name="Stinear T.P."/>
            <person name="Seemann T."/>
            <person name="Harrison P.F."/>
            <person name="Jenkin G.A."/>
            <person name="Davies J.K."/>
            <person name="Johnson P.D."/>
            <person name="Abdellah Z."/>
            <person name="Arrowsmith C."/>
            <person name="Chillingworth T."/>
            <person name="Churcher C."/>
            <person name="Clarke K."/>
            <person name="Cronin A."/>
            <person name="Davis P."/>
            <person name="Goodhead I."/>
            <person name="Holroyd N."/>
            <person name="Jagels K."/>
            <person name="Lord A."/>
            <person name="Moule S."/>
            <person name="Mungall K."/>
            <person name="Norbertczak H."/>
            <person name="Quail M.A."/>
            <person name="Rabbinowitsch E."/>
            <person name="Walker D."/>
            <person name="White B."/>
            <person name="Whitehead S."/>
            <person name="Small P.L."/>
            <person name="Brosch R."/>
            <person name="Ramakrishnan L."/>
            <person name="Fischbach M.A."/>
            <person name="Parkhill J."/>
            <person name="Cole S.T."/>
        </authorList>
    </citation>
    <scope>NUCLEOTIDE SEQUENCE [LARGE SCALE GENOMIC DNA]</scope>
    <source>
        <strain>ATCC BAA-535 / M</strain>
    </source>
</reference>
<name>TPIS_MYCMM</name>
<gene>
    <name evidence="1" type="primary">tpiA</name>
    <name type="ordered locus">MMAR_2241</name>
</gene>
<accession>B2HP86</accession>
<proteinExistence type="inferred from homology"/>
<comment type="function">
    <text evidence="1">Involved in the gluconeogenesis. Catalyzes stereospecifically the conversion of dihydroxyacetone phosphate (DHAP) to D-glyceraldehyde-3-phosphate (G3P).</text>
</comment>
<comment type="catalytic activity">
    <reaction evidence="1">
        <text>D-glyceraldehyde 3-phosphate = dihydroxyacetone phosphate</text>
        <dbReference type="Rhea" id="RHEA:18585"/>
        <dbReference type="ChEBI" id="CHEBI:57642"/>
        <dbReference type="ChEBI" id="CHEBI:59776"/>
        <dbReference type="EC" id="5.3.1.1"/>
    </reaction>
</comment>
<comment type="pathway">
    <text evidence="1">Carbohydrate biosynthesis; gluconeogenesis.</text>
</comment>
<comment type="pathway">
    <text evidence="1">Carbohydrate degradation; glycolysis; D-glyceraldehyde 3-phosphate from glycerone phosphate: step 1/1.</text>
</comment>
<comment type="subunit">
    <text evidence="1">Homodimer.</text>
</comment>
<comment type="subcellular location">
    <subcellularLocation>
        <location evidence="1">Cytoplasm</location>
    </subcellularLocation>
</comment>
<comment type="similarity">
    <text evidence="1">Belongs to the triosephosphate isomerase family.</text>
</comment>